<protein>
    <recommendedName>
        <fullName evidence="1">Glycerol-3-phosphate dehydrogenase [NAD(P)+]</fullName>
        <ecNumber evidence="1">1.1.1.94</ecNumber>
    </recommendedName>
    <alternativeName>
        <fullName evidence="1">NAD(P)(+)-dependent glycerol-3-phosphate dehydrogenase</fullName>
    </alternativeName>
    <alternativeName>
        <fullName evidence="1">NAD(P)H-dependent dihydroxyacetone-phosphate reductase</fullName>
    </alternativeName>
</protein>
<reference key="1">
    <citation type="journal article" date="2006" name="J. Bacteriol.">
        <title>Complete genome sequence of Yersinia pestis strains Antiqua and Nepal516: evidence of gene reduction in an emerging pathogen.</title>
        <authorList>
            <person name="Chain P.S.G."/>
            <person name="Hu P."/>
            <person name="Malfatti S.A."/>
            <person name="Radnedge L."/>
            <person name="Larimer F."/>
            <person name="Vergez L.M."/>
            <person name="Worsham P."/>
            <person name="Chu M.C."/>
            <person name="Andersen G.L."/>
        </authorList>
    </citation>
    <scope>NUCLEOTIDE SEQUENCE [LARGE SCALE GENOMIC DNA]</scope>
    <source>
        <strain>Nepal516</strain>
    </source>
</reference>
<reference key="2">
    <citation type="submission" date="2009-04" db="EMBL/GenBank/DDBJ databases">
        <title>Yersinia pestis Nepal516A whole genome shotgun sequencing project.</title>
        <authorList>
            <person name="Plunkett G. III"/>
            <person name="Anderson B.D."/>
            <person name="Baumler D.J."/>
            <person name="Burland V."/>
            <person name="Cabot E.L."/>
            <person name="Glasner J.D."/>
            <person name="Mau B."/>
            <person name="Neeno-Eckwall E."/>
            <person name="Perna N.T."/>
            <person name="Munk A.C."/>
            <person name="Tapia R."/>
            <person name="Green L.D."/>
            <person name="Rogers Y.C."/>
            <person name="Detter J.C."/>
            <person name="Bruce D.C."/>
            <person name="Brettin T.S."/>
        </authorList>
    </citation>
    <scope>NUCLEOTIDE SEQUENCE [LARGE SCALE GENOMIC DNA]</scope>
    <source>
        <strain>Nepal516</strain>
    </source>
</reference>
<feature type="chain" id="PRO_1000049571" description="Glycerol-3-phosphate dehydrogenase [NAD(P)+]">
    <location>
        <begin position="1"/>
        <end position="339"/>
    </location>
</feature>
<feature type="active site" description="Proton acceptor" evidence="1">
    <location>
        <position position="195"/>
    </location>
</feature>
<feature type="binding site" evidence="1">
    <location>
        <position position="15"/>
    </location>
    <ligand>
        <name>NADPH</name>
        <dbReference type="ChEBI" id="CHEBI:57783"/>
    </ligand>
</feature>
<feature type="binding site" evidence="1">
    <location>
        <position position="16"/>
    </location>
    <ligand>
        <name>NADPH</name>
        <dbReference type="ChEBI" id="CHEBI:57783"/>
    </ligand>
</feature>
<feature type="binding site" evidence="1">
    <location>
        <position position="36"/>
    </location>
    <ligand>
        <name>NADPH</name>
        <dbReference type="ChEBI" id="CHEBI:57783"/>
    </ligand>
</feature>
<feature type="binding site" evidence="1">
    <location>
        <position position="110"/>
    </location>
    <ligand>
        <name>NADPH</name>
        <dbReference type="ChEBI" id="CHEBI:57783"/>
    </ligand>
</feature>
<feature type="binding site" evidence="1">
    <location>
        <position position="110"/>
    </location>
    <ligand>
        <name>sn-glycerol 3-phosphate</name>
        <dbReference type="ChEBI" id="CHEBI:57597"/>
    </ligand>
</feature>
<feature type="binding site" evidence="1">
    <location>
        <position position="139"/>
    </location>
    <ligand>
        <name>sn-glycerol 3-phosphate</name>
        <dbReference type="ChEBI" id="CHEBI:57597"/>
    </ligand>
</feature>
<feature type="binding site" evidence="1">
    <location>
        <position position="141"/>
    </location>
    <ligand>
        <name>sn-glycerol 3-phosphate</name>
        <dbReference type="ChEBI" id="CHEBI:57597"/>
    </ligand>
</feature>
<feature type="binding site" evidence="1">
    <location>
        <position position="143"/>
    </location>
    <ligand>
        <name>NADPH</name>
        <dbReference type="ChEBI" id="CHEBI:57783"/>
    </ligand>
</feature>
<feature type="binding site" evidence="1">
    <location>
        <position position="195"/>
    </location>
    <ligand>
        <name>sn-glycerol 3-phosphate</name>
        <dbReference type="ChEBI" id="CHEBI:57597"/>
    </ligand>
</feature>
<feature type="binding site" evidence="1">
    <location>
        <position position="248"/>
    </location>
    <ligand>
        <name>sn-glycerol 3-phosphate</name>
        <dbReference type="ChEBI" id="CHEBI:57597"/>
    </ligand>
</feature>
<feature type="binding site" evidence="1">
    <location>
        <position position="258"/>
    </location>
    <ligand>
        <name>sn-glycerol 3-phosphate</name>
        <dbReference type="ChEBI" id="CHEBI:57597"/>
    </ligand>
</feature>
<feature type="binding site" evidence="1">
    <location>
        <position position="259"/>
    </location>
    <ligand>
        <name>NADPH</name>
        <dbReference type="ChEBI" id="CHEBI:57783"/>
    </ligand>
</feature>
<feature type="binding site" evidence="1">
    <location>
        <position position="259"/>
    </location>
    <ligand>
        <name>sn-glycerol 3-phosphate</name>
        <dbReference type="ChEBI" id="CHEBI:57597"/>
    </ligand>
</feature>
<feature type="binding site" evidence="1">
    <location>
        <position position="260"/>
    </location>
    <ligand>
        <name>sn-glycerol 3-phosphate</name>
        <dbReference type="ChEBI" id="CHEBI:57597"/>
    </ligand>
</feature>
<feature type="binding site" evidence="1">
    <location>
        <position position="283"/>
    </location>
    <ligand>
        <name>NADPH</name>
        <dbReference type="ChEBI" id="CHEBI:57783"/>
    </ligand>
</feature>
<feature type="binding site" evidence="1">
    <location>
        <position position="285"/>
    </location>
    <ligand>
        <name>NADPH</name>
        <dbReference type="ChEBI" id="CHEBI:57783"/>
    </ligand>
</feature>
<comment type="function">
    <text evidence="1">Catalyzes the reduction of the glycolytic intermediate dihydroxyacetone phosphate (DHAP) to sn-glycerol 3-phosphate (G3P), the key precursor for phospholipid synthesis.</text>
</comment>
<comment type="catalytic activity">
    <reaction evidence="1">
        <text>sn-glycerol 3-phosphate + NAD(+) = dihydroxyacetone phosphate + NADH + H(+)</text>
        <dbReference type="Rhea" id="RHEA:11092"/>
        <dbReference type="ChEBI" id="CHEBI:15378"/>
        <dbReference type="ChEBI" id="CHEBI:57540"/>
        <dbReference type="ChEBI" id="CHEBI:57597"/>
        <dbReference type="ChEBI" id="CHEBI:57642"/>
        <dbReference type="ChEBI" id="CHEBI:57945"/>
        <dbReference type="EC" id="1.1.1.94"/>
    </reaction>
    <physiologicalReaction direction="right-to-left" evidence="1">
        <dbReference type="Rhea" id="RHEA:11094"/>
    </physiologicalReaction>
</comment>
<comment type="catalytic activity">
    <reaction evidence="1">
        <text>sn-glycerol 3-phosphate + NADP(+) = dihydroxyacetone phosphate + NADPH + H(+)</text>
        <dbReference type="Rhea" id="RHEA:11096"/>
        <dbReference type="ChEBI" id="CHEBI:15378"/>
        <dbReference type="ChEBI" id="CHEBI:57597"/>
        <dbReference type="ChEBI" id="CHEBI:57642"/>
        <dbReference type="ChEBI" id="CHEBI:57783"/>
        <dbReference type="ChEBI" id="CHEBI:58349"/>
        <dbReference type="EC" id="1.1.1.94"/>
    </reaction>
    <physiologicalReaction direction="right-to-left" evidence="1">
        <dbReference type="Rhea" id="RHEA:11098"/>
    </physiologicalReaction>
</comment>
<comment type="pathway">
    <text evidence="1">Membrane lipid metabolism; glycerophospholipid metabolism.</text>
</comment>
<comment type="subcellular location">
    <subcellularLocation>
        <location evidence="1">Cytoplasm</location>
    </subcellularLocation>
</comment>
<comment type="similarity">
    <text evidence="1">Belongs to the NAD-dependent glycerol-3-phosphate dehydrogenase family.</text>
</comment>
<proteinExistence type="inferred from homology"/>
<gene>
    <name evidence="1" type="primary">gpsA</name>
    <name type="ordered locus">YPN_3782</name>
    <name type="ORF">YP516_4302</name>
</gene>
<keyword id="KW-0963">Cytoplasm</keyword>
<keyword id="KW-0444">Lipid biosynthesis</keyword>
<keyword id="KW-0443">Lipid metabolism</keyword>
<keyword id="KW-0520">NAD</keyword>
<keyword id="KW-0521">NADP</keyword>
<keyword id="KW-0547">Nucleotide-binding</keyword>
<keyword id="KW-0560">Oxidoreductase</keyword>
<keyword id="KW-0594">Phospholipid biosynthesis</keyword>
<keyword id="KW-1208">Phospholipid metabolism</keyword>
<evidence type="ECO:0000255" key="1">
    <source>
        <dbReference type="HAMAP-Rule" id="MF_00394"/>
    </source>
</evidence>
<organism>
    <name type="scientific">Yersinia pestis bv. Antiqua (strain Nepal516)</name>
    <dbReference type="NCBI Taxonomy" id="377628"/>
    <lineage>
        <taxon>Bacteria</taxon>
        <taxon>Pseudomonadati</taxon>
        <taxon>Pseudomonadota</taxon>
        <taxon>Gammaproteobacteria</taxon>
        <taxon>Enterobacterales</taxon>
        <taxon>Yersiniaceae</taxon>
        <taxon>Yersinia</taxon>
    </lineage>
</organism>
<sequence>MNTNPASMAVIGAGSYGTALAITLARNGHQVVLWGHDPKHIQQLQQDRCNRAFLPDAAFPDTLRLETDLACALAASRDVLVVVPSHVFGAVLHQLKPHLRKDARIVWATKGLEAETGRLLQDVAREVLGEAIPLAVISGPTFAKELAAGLPTAIALASTDVQFSEDLQQLLHCGKSFRVYSNPDFIGVQLGGAVKNVIAIGAGMSDGIGFGANARTALITRGLAEMTRLGTALGADPSTFMGMAGLGDLVLTCTDNQSRNRRFGIMLGQGLGVKEAQDNIGQVVEGYRNTKEVLALAQRHGVEMPITEQIYQVLYCHKNAREAALTLLGRTKKDEKIGI</sequence>
<name>GPDA_YERPN</name>
<accession>Q1CD21</accession>
<accession>D1Q2E2</accession>
<dbReference type="EC" id="1.1.1.94" evidence="1"/>
<dbReference type="EMBL" id="CP000305">
    <property type="protein sequence ID" value="ABG20109.1"/>
    <property type="molecule type" value="Genomic_DNA"/>
</dbReference>
<dbReference type="EMBL" id="ACNQ01000019">
    <property type="protein sequence ID" value="EEO74695.1"/>
    <property type="molecule type" value="Genomic_DNA"/>
</dbReference>
<dbReference type="RefSeq" id="WP_002208975.1">
    <property type="nucleotide sequence ID" value="NZ_ACNQ01000019.1"/>
</dbReference>
<dbReference type="SMR" id="Q1CD21"/>
<dbReference type="GeneID" id="57974523"/>
<dbReference type="KEGG" id="ypn:YPN_3782"/>
<dbReference type="HOGENOM" id="CLU_033449_0_2_6"/>
<dbReference type="UniPathway" id="UPA00940"/>
<dbReference type="Proteomes" id="UP000008936">
    <property type="component" value="Chromosome"/>
</dbReference>
<dbReference type="GO" id="GO:0005829">
    <property type="term" value="C:cytosol"/>
    <property type="evidence" value="ECO:0007669"/>
    <property type="project" value="TreeGrafter"/>
</dbReference>
<dbReference type="GO" id="GO:0047952">
    <property type="term" value="F:glycerol-3-phosphate dehydrogenase [NAD(P)+] activity"/>
    <property type="evidence" value="ECO:0007669"/>
    <property type="project" value="UniProtKB-UniRule"/>
</dbReference>
<dbReference type="GO" id="GO:0051287">
    <property type="term" value="F:NAD binding"/>
    <property type="evidence" value="ECO:0007669"/>
    <property type="project" value="InterPro"/>
</dbReference>
<dbReference type="GO" id="GO:0005975">
    <property type="term" value="P:carbohydrate metabolic process"/>
    <property type="evidence" value="ECO:0007669"/>
    <property type="project" value="InterPro"/>
</dbReference>
<dbReference type="GO" id="GO:0046167">
    <property type="term" value="P:glycerol-3-phosphate biosynthetic process"/>
    <property type="evidence" value="ECO:0007669"/>
    <property type="project" value="UniProtKB-UniRule"/>
</dbReference>
<dbReference type="GO" id="GO:0046168">
    <property type="term" value="P:glycerol-3-phosphate catabolic process"/>
    <property type="evidence" value="ECO:0007669"/>
    <property type="project" value="InterPro"/>
</dbReference>
<dbReference type="GO" id="GO:0046474">
    <property type="term" value="P:glycerophospholipid biosynthetic process"/>
    <property type="evidence" value="ECO:0007669"/>
    <property type="project" value="TreeGrafter"/>
</dbReference>
<dbReference type="FunFam" id="1.10.1040.10:FF:000001">
    <property type="entry name" value="Glycerol-3-phosphate dehydrogenase [NAD(P)+]"/>
    <property type="match status" value="1"/>
</dbReference>
<dbReference type="FunFam" id="3.40.50.720:FF:000019">
    <property type="entry name" value="Glycerol-3-phosphate dehydrogenase [NAD(P)+]"/>
    <property type="match status" value="1"/>
</dbReference>
<dbReference type="Gene3D" id="1.10.1040.10">
    <property type="entry name" value="N-(1-d-carboxylethyl)-l-norvaline Dehydrogenase, domain 2"/>
    <property type="match status" value="1"/>
</dbReference>
<dbReference type="Gene3D" id="3.40.50.720">
    <property type="entry name" value="NAD(P)-binding Rossmann-like Domain"/>
    <property type="match status" value="1"/>
</dbReference>
<dbReference type="HAMAP" id="MF_00394">
    <property type="entry name" value="NAD_Glyc3P_dehydrog"/>
    <property type="match status" value="1"/>
</dbReference>
<dbReference type="InterPro" id="IPR008927">
    <property type="entry name" value="6-PGluconate_DH-like_C_sf"/>
</dbReference>
<dbReference type="InterPro" id="IPR013328">
    <property type="entry name" value="6PGD_dom2"/>
</dbReference>
<dbReference type="InterPro" id="IPR006168">
    <property type="entry name" value="G3P_DH_NAD-dep"/>
</dbReference>
<dbReference type="InterPro" id="IPR006109">
    <property type="entry name" value="G3P_DH_NAD-dep_C"/>
</dbReference>
<dbReference type="InterPro" id="IPR011128">
    <property type="entry name" value="G3P_DH_NAD-dep_N"/>
</dbReference>
<dbReference type="InterPro" id="IPR036291">
    <property type="entry name" value="NAD(P)-bd_dom_sf"/>
</dbReference>
<dbReference type="NCBIfam" id="NF000939">
    <property type="entry name" value="PRK00094.1-1"/>
    <property type="match status" value="1"/>
</dbReference>
<dbReference type="NCBIfam" id="NF000940">
    <property type="entry name" value="PRK00094.1-2"/>
    <property type="match status" value="1"/>
</dbReference>
<dbReference type="NCBIfam" id="NF000942">
    <property type="entry name" value="PRK00094.1-4"/>
    <property type="match status" value="1"/>
</dbReference>
<dbReference type="PANTHER" id="PTHR11728">
    <property type="entry name" value="GLYCEROL-3-PHOSPHATE DEHYDROGENASE"/>
    <property type="match status" value="1"/>
</dbReference>
<dbReference type="PANTHER" id="PTHR11728:SF1">
    <property type="entry name" value="GLYCEROL-3-PHOSPHATE DEHYDROGENASE [NAD(+)] 2, CHLOROPLASTIC"/>
    <property type="match status" value="1"/>
</dbReference>
<dbReference type="Pfam" id="PF07479">
    <property type="entry name" value="NAD_Gly3P_dh_C"/>
    <property type="match status" value="1"/>
</dbReference>
<dbReference type="Pfam" id="PF01210">
    <property type="entry name" value="NAD_Gly3P_dh_N"/>
    <property type="match status" value="1"/>
</dbReference>
<dbReference type="PIRSF" id="PIRSF000114">
    <property type="entry name" value="Glycerol-3-P_dh"/>
    <property type="match status" value="1"/>
</dbReference>
<dbReference type="PRINTS" id="PR00077">
    <property type="entry name" value="GPDHDRGNASE"/>
</dbReference>
<dbReference type="SUPFAM" id="SSF48179">
    <property type="entry name" value="6-phosphogluconate dehydrogenase C-terminal domain-like"/>
    <property type="match status" value="1"/>
</dbReference>
<dbReference type="SUPFAM" id="SSF51735">
    <property type="entry name" value="NAD(P)-binding Rossmann-fold domains"/>
    <property type="match status" value="1"/>
</dbReference>
<dbReference type="PROSITE" id="PS00957">
    <property type="entry name" value="NAD_G3PDH"/>
    <property type="match status" value="1"/>
</dbReference>